<organism>
    <name type="scientific">Bacillus subtilis (strain 168)</name>
    <dbReference type="NCBI Taxonomy" id="224308"/>
    <lineage>
        <taxon>Bacteria</taxon>
        <taxon>Bacillati</taxon>
        <taxon>Bacillota</taxon>
        <taxon>Bacilli</taxon>
        <taxon>Bacillales</taxon>
        <taxon>Bacillaceae</taxon>
        <taxon>Bacillus</taxon>
    </lineage>
</organism>
<name>YKVN_BACSU</name>
<reference key="1">
    <citation type="journal article" date="1997" name="Nature">
        <title>The complete genome sequence of the Gram-positive bacterium Bacillus subtilis.</title>
        <authorList>
            <person name="Kunst F."/>
            <person name="Ogasawara N."/>
            <person name="Moszer I."/>
            <person name="Albertini A.M."/>
            <person name="Alloni G."/>
            <person name="Azevedo V."/>
            <person name="Bertero M.G."/>
            <person name="Bessieres P."/>
            <person name="Bolotin A."/>
            <person name="Borchert S."/>
            <person name="Borriss R."/>
            <person name="Boursier L."/>
            <person name="Brans A."/>
            <person name="Braun M."/>
            <person name="Brignell S.C."/>
            <person name="Bron S."/>
            <person name="Brouillet S."/>
            <person name="Bruschi C.V."/>
            <person name="Caldwell B."/>
            <person name="Capuano V."/>
            <person name="Carter N.M."/>
            <person name="Choi S.-K."/>
            <person name="Codani J.-J."/>
            <person name="Connerton I.F."/>
            <person name="Cummings N.J."/>
            <person name="Daniel R.A."/>
            <person name="Denizot F."/>
            <person name="Devine K.M."/>
            <person name="Duesterhoeft A."/>
            <person name="Ehrlich S.D."/>
            <person name="Emmerson P.T."/>
            <person name="Entian K.-D."/>
            <person name="Errington J."/>
            <person name="Fabret C."/>
            <person name="Ferrari E."/>
            <person name="Foulger D."/>
            <person name="Fritz C."/>
            <person name="Fujita M."/>
            <person name="Fujita Y."/>
            <person name="Fuma S."/>
            <person name="Galizzi A."/>
            <person name="Galleron N."/>
            <person name="Ghim S.-Y."/>
            <person name="Glaser P."/>
            <person name="Goffeau A."/>
            <person name="Golightly E.J."/>
            <person name="Grandi G."/>
            <person name="Guiseppi G."/>
            <person name="Guy B.J."/>
            <person name="Haga K."/>
            <person name="Haiech J."/>
            <person name="Harwood C.R."/>
            <person name="Henaut A."/>
            <person name="Hilbert H."/>
            <person name="Holsappel S."/>
            <person name="Hosono S."/>
            <person name="Hullo M.-F."/>
            <person name="Itaya M."/>
            <person name="Jones L.-M."/>
            <person name="Joris B."/>
            <person name="Karamata D."/>
            <person name="Kasahara Y."/>
            <person name="Klaerr-Blanchard M."/>
            <person name="Klein C."/>
            <person name="Kobayashi Y."/>
            <person name="Koetter P."/>
            <person name="Koningstein G."/>
            <person name="Krogh S."/>
            <person name="Kumano M."/>
            <person name="Kurita K."/>
            <person name="Lapidus A."/>
            <person name="Lardinois S."/>
            <person name="Lauber J."/>
            <person name="Lazarevic V."/>
            <person name="Lee S.-M."/>
            <person name="Levine A."/>
            <person name="Liu H."/>
            <person name="Masuda S."/>
            <person name="Mauel C."/>
            <person name="Medigue C."/>
            <person name="Medina N."/>
            <person name="Mellado R.P."/>
            <person name="Mizuno M."/>
            <person name="Moestl D."/>
            <person name="Nakai S."/>
            <person name="Noback M."/>
            <person name="Noone D."/>
            <person name="O'Reilly M."/>
            <person name="Ogawa K."/>
            <person name="Ogiwara A."/>
            <person name="Oudega B."/>
            <person name="Park S.-H."/>
            <person name="Parro V."/>
            <person name="Pohl T.M."/>
            <person name="Portetelle D."/>
            <person name="Porwollik S."/>
            <person name="Prescott A.M."/>
            <person name="Presecan E."/>
            <person name="Pujic P."/>
            <person name="Purnelle B."/>
            <person name="Rapoport G."/>
            <person name="Rey M."/>
            <person name="Reynolds S."/>
            <person name="Rieger M."/>
            <person name="Rivolta C."/>
            <person name="Rocha E."/>
            <person name="Roche B."/>
            <person name="Rose M."/>
            <person name="Sadaie Y."/>
            <person name="Sato T."/>
            <person name="Scanlan E."/>
            <person name="Schleich S."/>
            <person name="Schroeter R."/>
            <person name="Scoffone F."/>
            <person name="Sekiguchi J."/>
            <person name="Sekowska A."/>
            <person name="Seror S.J."/>
            <person name="Serror P."/>
            <person name="Shin B.-S."/>
            <person name="Soldo B."/>
            <person name="Sorokin A."/>
            <person name="Tacconi E."/>
            <person name="Takagi T."/>
            <person name="Takahashi H."/>
            <person name="Takemaru K."/>
            <person name="Takeuchi M."/>
            <person name="Tamakoshi A."/>
            <person name="Tanaka T."/>
            <person name="Terpstra P."/>
            <person name="Tognoni A."/>
            <person name="Tosato V."/>
            <person name="Uchiyama S."/>
            <person name="Vandenbol M."/>
            <person name="Vannier F."/>
            <person name="Vassarotti A."/>
            <person name="Viari A."/>
            <person name="Wambutt R."/>
            <person name="Wedler E."/>
            <person name="Wedler H."/>
            <person name="Weitzenegger T."/>
            <person name="Winters P."/>
            <person name="Wipat A."/>
            <person name="Yamamoto H."/>
            <person name="Yamane K."/>
            <person name="Yasumoto K."/>
            <person name="Yata K."/>
            <person name="Yoshida K."/>
            <person name="Yoshikawa H.-F."/>
            <person name="Zumstein E."/>
            <person name="Yoshikawa H."/>
            <person name="Danchin A."/>
        </authorList>
    </citation>
    <scope>NUCLEOTIDE SEQUENCE [LARGE SCALE GENOMIC DNA]</scope>
    <source>
        <strain>168</strain>
    </source>
</reference>
<dbReference type="EMBL" id="AL009126">
    <property type="protein sequence ID" value="CAB13249.1"/>
    <property type="molecule type" value="Genomic_DNA"/>
</dbReference>
<dbReference type="PIR" id="E69868">
    <property type="entry name" value="E69868"/>
</dbReference>
<dbReference type="RefSeq" id="NP_389259.1">
    <property type="nucleotide sequence ID" value="NC_000964.3"/>
</dbReference>
<dbReference type="RefSeq" id="WP_003245808.1">
    <property type="nucleotide sequence ID" value="NZ_OZ025638.1"/>
</dbReference>
<dbReference type="SMR" id="O31679"/>
<dbReference type="FunCoup" id="O31679">
    <property type="interactions" value="52"/>
</dbReference>
<dbReference type="STRING" id="224308.BSU13760"/>
<dbReference type="PaxDb" id="224308-BSU13760"/>
<dbReference type="EnsemblBacteria" id="CAB13249">
    <property type="protein sequence ID" value="CAB13249"/>
    <property type="gene ID" value="BSU_13760"/>
</dbReference>
<dbReference type="GeneID" id="939274"/>
<dbReference type="KEGG" id="bsu:BSU13760"/>
<dbReference type="PATRIC" id="fig|224308.179.peg.1494"/>
<dbReference type="eggNOG" id="COG1733">
    <property type="taxonomic scope" value="Bacteria"/>
</dbReference>
<dbReference type="InParanoid" id="O31679"/>
<dbReference type="OrthoDB" id="9791143at2"/>
<dbReference type="PhylomeDB" id="O31679"/>
<dbReference type="BioCyc" id="BSUB:BSU13760-MONOMER"/>
<dbReference type="Proteomes" id="UP000001570">
    <property type="component" value="Chromosome"/>
</dbReference>
<dbReference type="GO" id="GO:0003677">
    <property type="term" value="F:DNA binding"/>
    <property type="evidence" value="ECO:0007669"/>
    <property type="project" value="UniProtKB-KW"/>
</dbReference>
<dbReference type="Gene3D" id="1.10.10.10">
    <property type="entry name" value="Winged helix-like DNA-binding domain superfamily/Winged helix DNA-binding domain"/>
    <property type="match status" value="1"/>
</dbReference>
<dbReference type="InterPro" id="IPR002577">
    <property type="entry name" value="HTH_HxlR"/>
</dbReference>
<dbReference type="InterPro" id="IPR036388">
    <property type="entry name" value="WH-like_DNA-bd_sf"/>
</dbReference>
<dbReference type="InterPro" id="IPR036390">
    <property type="entry name" value="WH_DNA-bd_sf"/>
</dbReference>
<dbReference type="PANTHER" id="PTHR33204:SF38">
    <property type="entry name" value="HTH-TYPE TRANSCRIPTIONAL ACTIVATOR HXLR"/>
    <property type="match status" value="1"/>
</dbReference>
<dbReference type="PANTHER" id="PTHR33204">
    <property type="entry name" value="TRANSCRIPTIONAL REGULATOR, MARR FAMILY"/>
    <property type="match status" value="1"/>
</dbReference>
<dbReference type="Pfam" id="PF01638">
    <property type="entry name" value="HxlR"/>
    <property type="match status" value="1"/>
</dbReference>
<dbReference type="SUPFAM" id="SSF46785">
    <property type="entry name" value="Winged helix' DNA-binding domain"/>
    <property type="match status" value="1"/>
</dbReference>
<dbReference type="PROSITE" id="PS51118">
    <property type="entry name" value="HTH_HXLR"/>
    <property type="match status" value="1"/>
</dbReference>
<protein>
    <recommendedName>
        <fullName>Uncharacterized HTH-type transcriptional regulator YkvN</fullName>
    </recommendedName>
</protein>
<proteinExistence type="predicted"/>
<accession>O31679</accession>
<sequence length="118" mass="13570">MKKFSCGFEVTKEVIGGKWKGLVLYFLMNGPKRTSELKRIIPNITQKMLIQTLRELEASGLVSRKMYNQVPPKVEYSSTELGESLKPILQELCQWGGYYAEQEYAEGEYEIVQPEQLS</sequence>
<evidence type="ECO:0000255" key="1">
    <source>
        <dbReference type="PROSITE-ProRule" id="PRU00435"/>
    </source>
</evidence>
<keyword id="KW-0238">DNA-binding</keyword>
<keyword id="KW-1185">Reference proteome</keyword>
<keyword id="KW-0804">Transcription</keyword>
<keyword id="KW-0805">Transcription regulation</keyword>
<gene>
    <name type="primary">ykvN</name>
    <name type="ordered locus">BSU13760</name>
</gene>
<feature type="chain" id="PRO_0000148886" description="Uncharacterized HTH-type transcriptional regulator YkvN">
    <location>
        <begin position="1"/>
        <end position="118"/>
    </location>
</feature>
<feature type="domain" description="HTH hxlR-type" evidence="1">
    <location>
        <begin position="6"/>
        <end position="104"/>
    </location>
</feature>